<gene>
    <name type="ordered locus">At2g41970</name>
    <name type="ORF">T6D20.14</name>
</gene>
<name>Y2197_ARATH</name>
<feature type="chain" id="PRO_0000389478" description="Probable protein kinase At2g41970">
    <location>
        <begin position="1"/>
        <end position="365"/>
    </location>
</feature>
<feature type="domain" description="Protein kinase" evidence="2">
    <location>
        <begin position="73"/>
        <end position="354"/>
    </location>
</feature>
<feature type="region of interest" description="Disordered" evidence="4">
    <location>
        <begin position="1"/>
        <end position="50"/>
    </location>
</feature>
<feature type="active site" description="Proton acceptor" evidence="2 3">
    <location>
        <position position="204"/>
    </location>
</feature>
<feature type="binding site" evidence="2">
    <location>
        <begin position="79"/>
        <end position="87"/>
    </location>
    <ligand>
        <name>ATP</name>
        <dbReference type="ChEBI" id="CHEBI:30616"/>
    </ligand>
</feature>
<feature type="binding site" evidence="2">
    <location>
        <position position="100"/>
    </location>
    <ligand>
        <name>ATP</name>
        <dbReference type="ChEBI" id="CHEBI:30616"/>
    </ligand>
</feature>
<feature type="modified residue" description="Phosphotyrosine" evidence="1">
    <location>
        <position position="146"/>
    </location>
</feature>
<feature type="modified residue" description="Phosphoserine" evidence="1">
    <location>
        <position position="208"/>
    </location>
</feature>
<feature type="modified residue" description="Phosphoserine" evidence="1">
    <location>
        <position position="238"/>
    </location>
</feature>
<feature type="modified residue" description="Phosphothreonine" evidence="1">
    <location>
        <position position="239"/>
    </location>
</feature>
<feature type="modified residue" description="Phosphothreonine" evidence="1">
    <location>
        <position position="244"/>
    </location>
</feature>
<feature type="modified residue" description="Phosphotyrosine" evidence="1">
    <location>
        <position position="252"/>
    </location>
</feature>
<proteinExistence type="evidence at transcript level"/>
<organism>
    <name type="scientific">Arabidopsis thaliana</name>
    <name type="common">Mouse-ear cress</name>
    <dbReference type="NCBI Taxonomy" id="3702"/>
    <lineage>
        <taxon>Eukaryota</taxon>
        <taxon>Viridiplantae</taxon>
        <taxon>Streptophyta</taxon>
        <taxon>Embryophyta</taxon>
        <taxon>Tracheophyta</taxon>
        <taxon>Spermatophyta</taxon>
        <taxon>Magnoliopsida</taxon>
        <taxon>eudicotyledons</taxon>
        <taxon>Gunneridae</taxon>
        <taxon>Pentapetalae</taxon>
        <taxon>rosids</taxon>
        <taxon>malvids</taxon>
        <taxon>Brassicales</taxon>
        <taxon>Brassicaceae</taxon>
        <taxon>Camelineae</taxon>
        <taxon>Arabidopsis</taxon>
    </lineage>
</organism>
<dbReference type="EC" id="2.7.11.-"/>
<dbReference type="EMBL" id="U90439">
    <property type="protein sequence ID" value="AAB63546.1"/>
    <property type="molecule type" value="Genomic_DNA"/>
</dbReference>
<dbReference type="EMBL" id="CP002685">
    <property type="protein sequence ID" value="AEC10057.1"/>
    <property type="molecule type" value="Genomic_DNA"/>
</dbReference>
<dbReference type="EMBL" id="BT010881">
    <property type="protein sequence ID" value="AAR24659.1"/>
    <property type="molecule type" value="mRNA"/>
</dbReference>
<dbReference type="EMBL" id="AK175234">
    <property type="protein sequence ID" value="BAD42997.1"/>
    <property type="molecule type" value="mRNA"/>
</dbReference>
<dbReference type="EMBL" id="AK175270">
    <property type="protein sequence ID" value="BAD43033.1"/>
    <property type="molecule type" value="mRNA"/>
</dbReference>
<dbReference type="EMBL" id="AK176504">
    <property type="protein sequence ID" value="BAD44267.1"/>
    <property type="molecule type" value="mRNA"/>
</dbReference>
<dbReference type="EMBL" id="AK176586">
    <property type="protein sequence ID" value="BAD44349.1"/>
    <property type="molecule type" value="mRNA"/>
</dbReference>
<dbReference type="EMBL" id="AK176796">
    <property type="protein sequence ID" value="BAD44559.1"/>
    <property type="molecule type" value="mRNA"/>
</dbReference>
<dbReference type="EMBL" id="AK220678">
    <property type="protein sequence ID" value="BAD93732.1"/>
    <property type="molecule type" value="mRNA"/>
</dbReference>
<dbReference type="PIR" id="D84848">
    <property type="entry name" value="D84848"/>
</dbReference>
<dbReference type="RefSeq" id="NP_181728.1">
    <property type="nucleotide sequence ID" value="NM_129761.3"/>
</dbReference>
<dbReference type="SMR" id="P93749"/>
<dbReference type="BioGRID" id="4134">
    <property type="interactions" value="1"/>
</dbReference>
<dbReference type="FunCoup" id="P93749">
    <property type="interactions" value="4"/>
</dbReference>
<dbReference type="IntAct" id="P93749">
    <property type="interactions" value="1"/>
</dbReference>
<dbReference type="STRING" id="3702.P93749"/>
<dbReference type="PaxDb" id="3702-AT2G41970.1"/>
<dbReference type="ProteomicsDB" id="242445"/>
<dbReference type="EnsemblPlants" id="AT2G41970.1">
    <property type="protein sequence ID" value="AT2G41970.1"/>
    <property type="gene ID" value="AT2G41970"/>
</dbReference>
<dbReference type="GeneID" id="818797"/>
<dbReference type="Gramene" id="AT2G41970.1">
    <property type="protein sequence ID" value="AT2G41970.1"/>
    <property type="gene ID" value="AT2G41970"/>
</dbReference>
<dbReference type="KEGG" id="ath:AT2G41970"/>
<dbReference type="Araport" id="AT2G41970"/>
<dbReference type="TAIR" id="AT2G41970">
    <property type="gene designation" value="MRI"/>
</dbReference>
<dbReference type="eggNOG" id="KOG1187">
    <property type="taxonomic scope" value="Eukaryota"/>
</dbReference>
<dbReference type="HOGENOM" id="CLU_000288_21_4_1"/>
<dbReference type="InParanoid" id="P93749"/>
<dbReference type="OMA" id="SWNQRAK"/>
<dbReference type="OrthoDB" id="4062651at2759"/>
<dbReference type="PhylomeDB" id="P93749"/>
<dbReference type="PRO" id="PR:P93749"/>
<dbReference type="Proteomes" id="UP000006548">
    <property type="component" value="Chromosome 2"/>
</dbReference>
<dbReference type="ExpressionAtlas" id="P93749">
    <property type="expression patterns" value="baseline and differential"/>
</dbReference>
<dbReference type="GO" id="GO:0005886">
    <property type="term" value="C:plasma membrane"/>
    <property type="evidence" value="ECO:0000314"/>
    <property type="project" value="TAIR"/>
</dbReference>
<dbReference type="GO" id="GO:0005524">
    <property type="term" value="F:ATP binding"/>
    <property type="evidence" value="ECO:0007669"/>
    <property type="project" value="UniProtKB-KW"/>
</dbReference>
<dbReference type="GO" id="GO:0004674">
    <property type="term" value="F:protein serine/threonine kinase activity"/>
    <property type="evidence" value="ECO:0007669"/>
    <property type="project" value="UniProtKB-KW"/>
</dbReference>
<dbReference type="GO" id="GO:0004713">
    <property type="term" value="F:protein tyrosine kinase activity"/>
    <property type="evidence" value="ECO:0007669"/>
    <property type="project" value="UniProtKB-KW"/>
</dbReference>
<dbReference type="GO" id="GO:0009860">
    <property type="term" value="P:pollen tube growth"/>
    <property type="evidence" value="ECO:0000315"/>
    <property type="project" value="TAIR"/>
</dbReference>
<dbReference type="GO" id="GO:0048768">
    <property type="term" value="P:root hair cell tip growth"/>
    <property type="evidence" value="ECO:0000315"/>
    <property type="project" value="TAIR"/>
</dbReference>
<dbReference type="FunFam" id="3.30.200.20:FF:000533">
    <property type="entry name" value="probable protein kinase At2g41970"/>
    <property type="match status" value="1"/>
</dbReference>
<dbReference type="FunFam" id="1.10.510.10:FF:000103">
    <property type="entry name" value="PTI1-like tyrosine-protein kinase 3"/>
    <property type="match status" value="1"/>
</dbReference>
<dbReference type="Gene3D" id="3.30.200.20">
    <property type="entry name" value="Phosphorylase Kinase, domain 1"/>
    <property type="match status" value="1"/>
</dbReference>
<dbReference type="Gene3D" id="1.10.510.10">
    <property type="entry name" value="Transferase(Phosphotransferase) domain 1"/>
    <property type="match status" value="1"/>
</dbReference>
<dbReference type="InterPro" id="IPR011009">
    <property type="entry name" value="Kinase-like_dom_sf"/>
</dbReference>
<dbReference type="InterPro" id="IPR052101">
    <property type="entry name" value="Plant_StressResp_Kinase"/>
</dbReference>
<dbReference type="InterPro" id="IPR000719">
    <property type="entry name" value="Prot_kinase_dom"/>
</dbReference>
<dbReference type="InterPro" id="IPR017441">
    <property type="entry name" value="Protein_kinase_ATP_BS"/>
</dbReference>
<dbReference type="InterPro" id="IPR001245">
    <property type="entry name" value="Ser-Thr/Tyr_kinase_cat_dom"/>
</dbReference>
<dbReference type="InterPro" id="IPR008266">
    <property type="entry name" value="Tyr_kinase_AS"/>
</dbReference>
<dbReference type="InterPro" id="IPR020635">
    <property type="entry name" value="Tyr_kinase_cat_dom"/>
</dbReference>
<dbReference type="PANTHER" id="PTHR47983:SF16">
    <property type="entry name" value="OS02G0565500 PROTEIN"/>
    <property type="match status" value="1"/>
</dbReference>
<dbReference type="PANTHER" id="PTHR47983">
    <property type="entry name" value="PTO-INTERACTING PROTEIN 1-LIKE"/>
    <property type="match status" value="1"/>
</dbReference>
<dbReference type="Pfam" id="PF07714">
    <property type="entry name" value="PK_Tyr_Ser-Thr"/>
    <property type="match status" value="1"/>
</dbReference>
<dbReference type="SMART" id="SM00219">
    <property type="entry name" value="TyrKc"/>
    <property type="match status" value="1"/>
</dbReference>
<dbReference type="SUPFAM" id="SSF56112">
    <property type="entry name" value="Protein kinase-like (PK-like)"/>
    <property type="match status" value="1"/>
</dbReference>
<dbReference type="PROSITE" id="PS00107">
    <property type="entry name" value="PROTEIN_KINASE_ATP"/>
    <property type="match status" value="1"/>
</dbReference>
<dbReference type="PROSITE" id="PS50011">
    <property type="entry name" value="PROTEIN_KINASE_DOM"/>
    <property type="match status" value="1"/>
</dbReference>
<dbReference type="PROSITE" id="PS00109">
    <property type="entry name" value="PROTEIN_KINASE_TYR"/>
    <property type="match status" value="1"/>
</dbReference>
<protein>
    <recommendedName>
        <fullName>Probable protein kinase At2g41970</fullName>
        <ecNumber>2.7.11.-</ecNumber>
    </recommendedName>
</protein>
<evidence type="ECO:0000250" key="1">
    <source>
        <dbReference type="UniProtKB" id="O48814"/>
    </source>
</evidence>
<evidence type="ECO:0000255" key="2">
    <source>
        <dbReference type="PROSITE-ProRule" id="PRU00159"/>
    </source>
</evidence>
<evidence type="ECO:0000255" key="3">
    <source>
        <dbReference type="PROSITE-ProRule" id="PRU10028"/>
    </source>
</evidence>
<evidence type="ECO:0000256" key="4">
    <source>
        <dbReference type="SAM" id="MobiDB-lite"/>
    </source>
</evidence>
<sequence>MFCCGGADEEPAGPPANQYAAPPNKAGNPNFGGGNRGEPRNPNAPRSGAPAKVLPIEIPSVALDELNRMAGNFGNKALIGEGSYGRVFCGKFKGEAVAIKKLDASSSEEPDSDFTSQLSVVSRLKHDHFVELLGYCLEANNRILIYQFATKGSLHDVLHGRKGVQGAEPGPVLNWNQRVKIAYGAAKGLEFLHEKVQPPIVHRDVRSSNVLLFDDFVAKMADFNLTNASSDTAARLHSTRVLGTFGYHAPEYAMTGQITQKSDVYSFGVVLLELLTGRKPVDHTMPKGQQSLVTWATPRLSEDKVKQCIDPKLNNDFPPKAVAKLAAVAALCVQYEADFRPNMTIVVKALQPLLNSKPAGPESTS</sequence>
<keyword id="KW-0067">ATP-binding</keyword>
<keyword id="KW-0418">Kinase</keyword>
<keyword id="KW-0547">Nucleotide-binding</keyword>
<keyword id="KW-0597">Phosphoprotein</keyword>
<keyword id="KW-1185">Reference proteome</keyword>
<keyword id="KW-0723">Serine/threonine-protein kinase</keyword>
<keyword id="KW-0808">Transferase</keyword>
<keyword id="KW-0829">Tyrosine-protein kinase</keyword>
<comment type="similarity">
    <text evidence="2">Belongs to the protein kinase superfamily. Tyr protein kinase family.</text>
</comment>
<accession>P93749</accession>
<reference key="1">
    <citation type="journal article" date="1999" name="Nature">
        <title>Sequence and analysis of chromosome 2 of the plant Arabidopsis thaliana.</title>
        <authorList>
            <person name="Lin X."/>
            <person name="Kaul S."/>
            <person name="Rounsley S.D."/>
            <person name="Shea T.P."/>
            <person name="Benito M.-I."/>
            <person name="Town C.D."/>
            <person name="Fujii C.Y."/>
            <person name="Mason T.M."/>
            <person name="Bowman C.L."/>
            <person name="Barnstead M.E."/>
            <person name="Feldblyum T.V."/>
            <person name="Buell C.R."/>
            <person name="Ketchum K.A."/>
            <person name="Lee J.J."/>
            <person name="Ronning C.M."/>
            <person name="Koo H.L."/>
            <person name="Moffat K.S."/>
            <person name="Cronin L.A."/>
            <person name="Shen M."/>
            <person name="Pai G."/>
            <person name="Van Aken S."/>
            <person name="Umayam L."/>
            <person name="Tallon L.J."/>
            <person name="Gill J.E."/>
            <person name="Adams M.D."/>
            <person name="Carrera A.J."/>
            <person name="Creasy T.H."/>
            <person name="Goodman H.M."/>
            <person name="Somerville C.R."/>
            <person name="Copenhaver G.P."/>
            <person name="Preuss D."/>
            <person name="Nierman W.C."/>
            <person name="White O."/>
            <person name="Eisen J.A."/>
            <person name="Salzberg S.L."/>
            <person name="Fraser C.M."/>
            <person name="Venter J.C."/>
        </authorList>
    </citation>
    <scope>NUCLEOTIDE SEQUENCE [LARGE SCALE GENOMIC DNA]</scope>
    <source>
        <strain>cv. Columbia</strain>
    </source>
</reference>
<reference key="2">
    <citation type="journal article" date="2017" name="Plant J.">
        <title>Araport11: a complete reannotation of the Arabidopsis thaliana reference genome.</title>
        <authorList>
            <person name="Cheng C.Y."/>
            <person name="Krishnakumar V."/>
            <person name="Chan A.P."/>
            <person name="Thibaud-Nissen F."/>
            <person name="Schobel S."/>
            <person name="Town C.D."/>
        </authorList>
    </citation>
    <scope>GENOME REANNOTATION</scope>
    <source>
        <strain>cv. Columbia</strain>
    </source>
</reference>
<reference key="3">
    <citation type="journal article" date="2002" name="Science">
        <title>Functional annotation of a full-length Arabidopsis cDNA collection.</title>
        <authorList>
            <person name="Seki M."/>
            <person name="Narusaka M."/>
            <person name="Kamiya A."/>
            <person name="Ishida J."/>
            <person name="Satou M."/>
            <person name="Sakurai T."/>
            <person name="Nakajima M."/>
            <person name="Enju A."/>
            <person name="Akiyama K."/>
            <person name="Oono Y."/>
            <person name="Muramatsu M."/>
            <person name="Hayashizaki Y."/>
            <person name="Kawai J."/>
            <person name="Carninci P."/>
            <person name="Itoh M."/>
            <person name="Ishii Y."/>
            <person name="Arakawa T."/>
            <person name="Shibata K."/>
            <person name="Shinagawa A."/>
            <person name="Shinozaki K."/>
        </authorList>
    </citation>
    <scope>NUCLEOTIDE SEQUENCE [LARGE SCALE MRNA]</scope>
    <source>
        <strain>cv. Columbia</strain>
    </source>
</reference>
<reference key="4">
    <citation type="submission" date="2005-03" db="EMBL/GenBank/DDBJ databases">
        <title>Large-scale analysis of RIKEN Arabidopsis full-length (RAFL) cDNAs.</title>
        <authorList>
            <person name="Totoki Y."/>
            <person name="Seki M."/>
            <person name="Ishida J."/>
            <person name="Nakajima M."/>
            <person name="Enju A."/>
            <person name="Kamiya A."/>
            <person name="Narusaka M."/>
            <person name="Shin-i T."/>
            <person name="Nakagawa M."/>
            <person name="Sakamoto N."/>
            <person name="Oishi K."/>
            <person name="Kohara Y."/>
            <person name="Kobayashi M."/>
            <person name="Toyoda A."/>
            <person name="Sakaki Y."/>
            <person name="Sakurai T."/>
            <person name="Iida K."/>
            <person name="Akiyama K."/>
            <person name="Satou M."/>
            <person name="Toyoda T."/>
            <person name="Konagaya A."/>
            <person name="Carninci P."/>
            <person name="Kawai J."/>
            <person name="Hayashizaki Y."/>
            <person name="Shinozaki K."/>
        </authorList>
    </citation>
    <scope>NUCLEOTIDE SEQUENCE [LARGE SCALE MRNA]</scope>
    <source>
        <strain>cv. Columbia</strain>
    </source>
</reference>